<proteinExistence type="inferred from homology"/>
<dbReference type="EC" id="3.1.1.96" evidence="1"/>
<dbReference type="EMBL" id="CP000561">
    <property type="protein sequence ID" value="ABO09089.1"/>
    <property type="molecule type" value="Genomic_DNA"/>
</dbReference>
<dbReference type="RefSeq" id="WP_011850348.1">
    <property type="nucleotide sequence ID" value="NC_009073.1"/>
</dbReference>
<dbReference type="SMR" id="A3MWS2"/>
<dbReference type="STRING" id="410359.Pcal_1672"/>
<dbReference type="GeneID" id="4909013"/>
<dbReference type="KEGG" id="pcl:Pcal_1672"/>
<dbReference type="eggNOG" id="arCOG01616">
    <property type="taxonomic scope" value="Archaea"/>
</dbReference>
<dbReference type="HOGENOM" id="CLU_056464_1_0_2"/>
<dbReference type="OrthoDB" id="9863at2157"/>
<dbReference type="Proteomes" id="UP000001431">
    <property type="component" value="Chromosome"/>
</dbReference>
<dbReference type="GO" id="GO:0051499">
    <property type="term" value="F:D-aminoacyl-tRNA deacylase activity"/>
    <property type="evidence" value="ECO:0007669"/>
    <property type="project" value="UniProtKB-UniRule"/>
</dbReference>
<dbReference type="GO" id="GO:0008270">
    <property type="term" value="F:zinc ion binding"/>
    <property type="evidence" value="ECO:0007669"/>
    <property type="project" value="UniProtKB-UniRule"/>
</dbReference>
<dbReference type="GO" id="GO:0019478">
    <property type="term" value="P:D-amino acid catabolic process"/>
    <property type="evidence" value="ECO:0007669"/>
    <property type="project" value="UniProtKB-UniRule"/>
</dbReference>
<dbReference type="Gene3D" id="3.40.50.10700">
    <property type="entry name" value="AF0625-like"/>
    <property type="match status" value="1"/>
</dbReference>
<dbReference type="Gene3D" id="3.40.630.50">
    <property type="entry name" value="AF0625-like"/>
    <property type="match status" value="1"/>
</dbReference>
<dbReference type="HAMAP" id="MF_00562">
    <property type="entry name" value="Deacylase_DtdA"/>
    <property type="match status" value="1"/>
</dbReference>
<dbReference type="InterPro" id="IPR018033">
    <property type="entry name" value="Deacylase_DtdA_archaea"/>
</dbReference>
<dbReference type="InterPro" id="IPR007508">
    <property type="entry name" value="DtdA"/>
</dbReference>
<dbReference type="PANTHER" id="PTHR34667">
    <property type="entry name" value="D-AMINOACYL-TRNA DEACYLASE"/>
    <property type="match status" value="1"/>
</dbReference>
<dbReference type="PANTHER" id="PTHR34667:SF1">
    <property type="entry name" value="D-AMINOACYL-TRNA DEACYLASE"/>
    <property type="match status" value="1"/>
</dbReference>
<dbReference type="Pfam" id="PF04414">
    <property type="entry name" value="tRNA_deacylase"/>
    <property type="match status" value="1"/>
</dbReference>
<dbReference type="SUPFAM" id="SSF142535">
    <property type="entry name" value="AF0625-like"/>
    <property type="match status" value="1"/>
</dbReference>
<feature type="chain" id="PRO_0000345228" description="D-aminoacyl-tRNA deacylase">
    <location>
        <begin position="1"/>
        <end position="251"/>
    </location>
</feature>
<reference key="1">
    <citation type="submission" date="2007-02" db="EMBL/GenBank/DDBJ databases">
        <title>Complete sequence of Pyrobaculum calidifontis JCM 11548.</title>
        <authorList>
            <consortium name="US DOE Joint Genome Institute"/>
            <person name="Copeland A."/>
            <person name="Lucas S."/>
            <person name="Lapidus A."/>
            <person name="Barry K."/>
            <person name="Glavina del Rio T."/>
            <person name="Dalin E."/>
            <person name="Tice H."/>
            <person name="Pitluck S."/>
            <person name="Chain P."/>
            <person name="Malfatti S."/>
            <person name="Shin M."/>
            <person name="Vergez L."/>
            <person name="Schmutz J."/>
            <person name="Larimer F."/>
            <person name="Land M."/>
            <person name="Hauser L."/>
            <person name="Kyrpides N."/>
            <person name="Mikhailova N."/>
            <person name="Cozen A.E."/>
            <person name="Fitz-Gibbon S.T."/>
            <person name="House C.H."/>
            <person name="Saltikov C."/>
            <person name="Lowe T.M."/>
            <person name="Richardson P."/>
        </authorList>
    </citation>
    <scope>NUCLEOTIDE SEQUENCE [LARGE SCALE GENOMIC DNA]</scope>
    <source>
        <strain>DSM 21063 / JCM 11548 / VA1</strain>
    </source>
</reference>
<gene>
    <name evidence="1" type="primary">dtdA</name>
    <name type="ordered locus">Pcal_1672</name>
</gene>
<accession>A3MWS2</accession>
<comment type="function">
    <text evidence="1">D-aminoacyl-tRNA deacylase with broad substrate specificity. By recycling D-aminoacyl-tRNA to D-amino acids and free tRNA molecules, this enzyme counteracts the toxicity associated with the formation of D-aminoacyl-tRNA entities in vivo.</text>
</comment>
<comment type="catalytic activity">
    <reaction evidence="1">
        <text>a D-aminoacyl-tRNA + H2O = a tRNA + a D-alpha-amino acid + H(+)</text>
        <dbReference type="Rhea" id="RHEA:13953"/>
        <dbReference type="Rhea" id="RHEA-COMP:10123"/>
        <dbReference type="Rhea" id="RHEA-COMP:10124"/>
        <dbReference type="ChEBI" id="CHEBI:15377"/>
        <dbReference type="ChEBI" id="CHEBI:15378"/>
        <dbReference type="ChEBI" id="CHEBI:59871"/>
        <dbReference type="ChEBI" id="CHEBI:78442"/>
        <dbReference type="ChEBI" id="CHEBI:79333"/>
        <dbReference type="EC" id="3.1.1.96"/>
    </reaction>
</comment>
<comment type="catalytic activity">
    <reaction evidence="1">
        <text>glycyl-tRNA(Ala) + H2O = tRNA(Ala) + glycine + H(+)</text>
        <dbReference type="Rhea" id="RHEA:53744"/>
        <dbReference type="Rhea" id="RHEA-COMP:9657"/>
        <dbReference type="Rhea" id="RHEA-COMP:13640"/>
        <dbReference type="ChEBI" id="CHEBI:15377"/>
        <dbReference type="ChEBI" id="CHEBI:15378"/>
        <dbReference type="ChEBI" id="CHEBI:57305"/>
        <dbReference type="ChEBI" id="CHEBI:78442"/>
        <dbReference type="ChEBI" id="CHEBI:78522"/>
        <dbReference type="EC" id="3.1.1.96"/>
    </reaction>
</comment>
<comment type="cofactor">
    <cofactor evidence="1">
        <name>Zn(2+)</name>
        <dbReference type="ChEBI" id="CHEBI:29105"/>
    </cofactor>
    <text evidence="1">Binds 2 Zn(2+) ions per subunit.</text>
</comment>
<comment type="subunit">
    <text evidence="1">Monomer.</text>
</comment>
<comment type="similarity">
    <text evidence="1">Belongs to the DtdA deacylase family.</text>
</comment>
<keyword id="KW-0378">Hydrolase</keyword>
<keyword id="KW-0479">Metal-binding</keyword>
<keyword id="KW-0862">Zinc</keyword>
<organism>
    <name type="scientific">Pyrobaculum calidifontis (strain DSM 21063 / JCM 11548 / VA1)</name>
    <dbReference type="NCBI Taxonomy" id="410359"/>
    <lineage>
        <taxon>Archaea</taxon>
        <taxon>Thermoproteota</taxon>
        <taxon>Thermoprotei</taxon>
        <taxon>Thermoproteales</taxon>
        <taxon>Thermoproteaceae</taxon>
        <taxon>Pyrobaculum</taxon>
    </lineage>
</organism>
<protein>
    <recommendedName>
        <fullName evidence="1">D-aminoacyl-tRNA deacylase</fullName>
        <ecNumber evidence="1">3.1.1.96</ecNumber>
    </recommendedName>
    <alternativeName>
        <fullName>D-tyrosyl-tRNA(Tyr) deacylase</fullName>
    </alternativeName>
</protein>
<sequence length="251" mass="27575">MYVLVLSMGDPVSRTFLDVTGPMPLLKTVGNVEVRKYRDMPVVIHRGDPVEFGAEEVLASLGKWAIFISRHEMANPKPFLTVHTPGAWPDVSVSNPRLVSSLYRALCKVAEEPFDCAIEATHHPPNTSAVSATFLEVGSTEAEWNSRRAVGLLQAALEEAVKGGVEATPTMVIGDLHYTTVGDLVLKGDIDVGHIVPKYVEITLDVVRRAYEKHTVPIRRAILFRKNVKNPTRSEVVEFLKAKGVDVVLKG</sequence>
<evidence type="ECO:0000255" key="1">
    <source>
        <dbReference type="HAMAP-Rule" id="MF_00562"/>
    </source>
</evidence>
<name>DTDA_PYRCJ</name>